<name>EAES_STRVT</name>
<feature type="chain" id="PRO_0000443241" description="7-epi-alpha-eudesmol synthase ((2E,6E)-farnesyl diphosphate cyclizing)">
    <location>
        <begin position="1"/>
        <end position="343"/>
    </location>
</feature>
<feature type="short sequence motif" description="DDXXD motif" evidence="6">
    <location>
        <begin position="80"/>
        <end position="84"/>
    </location>
</feature>
<feature type="binding site" evidence="1">
    <location>
        <position position="80"/>
    </location>
    <ligand>
        <name>Mg(2+)</name>
        <dbReference type="ChEBI" id="CHEBI:18420"/>
        <label>1</label>
    </ligand>
</feature>
<feature type="binding site" evidence="1">
    <location>
        <position position="84"/>
    </location>
    <ligand>
        <name>Mg(2+)</name>
        <dbReference type="ChEBI" id="CHEBI:18420"/>
        <label>1</label>
    </ligand>
</feature>
<feature type="binding site" evidence="1">
    <location>
        <position position="84"/>
    </location>
    <ligand>
        <name>Mg(2+)</name>
        <dbReference type="ChEBI" id="CHEBI:18420"/>
        <label>2</label>
    </ligand>
</feature>
<feature type="binding site" evidence="1">
    <location>
        <position position="177"/>
    </location>
    <ligand>
        <name>substrate</name>
    </ligand>
</feature>
<feature type="binding site" evidence="1">
    <location>
        <position position="223"/>
    </location>
    <ligand>
        <name>Mg(2+)</name>
        <dbReference type="ChEBI" id="CHEBI:18420"/>
        <label>3</label>
    </ligand>
</feature>
<feature type="binding site" evidence="1">
    <location>
        <position position="227"/>
    </location>
    <ligand>
        <name>Mg(2+)</name>
        <dbReference type="ChEBI" id="CHEBI:18420"/>
        <label>3</label>
    </ligand>
</feature>
<feature type="binding site" evidence="1">
    <location>
        <position position="230"/>
    </location>
    <ligand>
        <name>substrate</name>
    </ligand>
</feature>
<feature type="binding site" evidence="1">
    <location>
        <position position="231"/>
    </location>
    <ligand>
        <name>Mg(2+)</name>
        <dbReference type="ChEBI" id="CHEBI:18420"/>
        <label>3</label>
    </ligand>
</feature>
<feature type="binding site" evidence="1">
    <location>
        <begin position="317"/>
        <end position="318"/>
    </location>
    <ligand>
        <name>substrate</name>
    </ligand>
</feature>
<feature type="site" description="Plays a critical role in the stabilization of intermediate cation" evidence="1">
    <location>
        <position position="77"/>
    </location>
</feature>
<feature type="site" description="Plays a critical role for substrate recognition" evidence="1">
    <location>
        <position position="81"/>
    </location>
</feature>
<feature type="site" description="Plays a critical role for substrate recognition" evidence="1">
    <location>
        <position position="156"/>
    </location>
</feature>
<evidence type="ECO:0000250" key="1">
    <source>
        <dbReference type="UniProtKB" id="B5HDJ6"/>
    </source>
</evidence>
<evidence type="ECO:0000269" key="2">
    <source>
    </source>
</evidence>
<evidence type="ECO:0000269" key="3">
    <source>
    </source>
</evidence>
<evidence type="ECO:0000303" key="4">
    <source>
    </source>
</evidence>
<evidence type="ECO:0000305" key="5"/>
<evidence type="ECO:0000305" key="6">
    <source>
    </source>
</evidence>
<evidence type="ECO:0000312" key="7">
    <source>
        <dbReference type="EMBL" id="EFL36708.1"/>
    </source>
</evidence>
<evidence type="ECO:0000312" key="8">
    <source>
        <dbReference type="Proteomes" id="UP000004184"/>
    </source>
</evidence>
<organism>
    <name type="scientific">Streptomyces viridochromogenes (strain DSM 40736 / JCM 4977 / BCRC 1201 / Tue 494)</name>
    <dbReference type="NCBI Taxonomy" id="591159"/>
    <lineage>
        <taxon>Bacteria</taxon>
        <taxon>Bacillati</taxon>
        <taxon>Actinomycetota</taxon>
        <taxon>Actinomycetes</taxon>
        <taxon>Kitasatosporales</taxon>
        <taxon>Streptomycetaceae</taxon>
        <taxon>Streptomyces</taxon>
    </lineage>
</organism>
<protein>
    <recommendedName>
        <fullName evidence="4">7-epi-alpha-eudesmol synthase ((2E,6E)-farnesyl diphosphate cyclizing)</fullName>
        <ecNumber evidence="2 3">4.2.3.169</ecNumber>
    </recommendedName>
    <alternativeName>
        <fullName evidence="4">Terpene cyclase</fullName>
    </alternativeName>
    <alternativeName>
        <fullName evidence="4">Type I terpene cyclase</fullName>
    </alternativeName>
</protein>
<proteinExistence type="evidence at protein level"/>
<accession>D9XD61</accession>
<dbReference type="EC" id="4.2.3.169" evidence="2 3"/>
<dbReference type="EMBL" id="GG657757">
    <property type="protein sequence ID" value="EFL36708.1"/>
    <property type="molecule type" value="Genomic_DNA"/>
</dbReference>
<dbReference type="RefSeq" id="WP_003994861.1">
    <property type="nucleotide sequence ID" value="NZ_GG657757.1"/>
</dbReference>
<dbReference type="SMR" id="D9XD61"/>
<dbReference type="STRING" id="591159.SSQG_07226"/>
<dbReference type="eggNOG" id="COG2124">
    <property type="taxonomic scope" value="Bacteria"/>
</dbReference>
<dbReference type="HOGENOM" id="CLU_042538_4_0_11"/>
<dbReference type="OrthoDB" id="3676909at2"/>
<dbReference type="BRENDA" id="4.2.3.169">
    <property type="organism ID" value="6116"/>
</dbReference>
<dbReference type="UniPathway" id="UPA00213"/>
<dbReference type="Proteomes" id="UP000004184">
    <property type="component" value="Unassembled WGS sequence"/>
</dbReference>
<dbReference type="GO" id="GO:0046872">
    <property type="term" value="F:metal ion binding"/>
    <property type="evidence" value="ECO:0007669"/>
    <property type="project" value="UniProtKB-KW"/>
</dbReference>
<dbReference type="GO" id="GO:0010333">
    <property type="term" value="F:terpene synthase activity"/>
    <property type="evidence" value="ECO:0007669"/>
    <property type="project" value="InterPro"/>
</dbReference>
<dbReference type="GO" id="GO:0016114">
    <property type="term" value="P:terpenoid biosynthetic process"/>
    <property type="evidence" value="ECO:0007669"/>
    <property type="project" value="UniProtKB-UniPathway"/>
</dbReference>
<dbReference type="Gene3D" id="1.10.600.10">
    <property type="entry name" value="Farnesyl Diphosphate Synthase"/>
    <property type="match status" value="1"/>
</dbReference>
<dbReference type="InterPro" id="IPR048141">
    <property type="entry name" value="Eudesmol_syn"/>
</dbReference>
<dbReference type="InterPro" id="IPR008949">
    <property type="entry name" value="Isoprenoid_synthase_dom_sf"/>
</dbReference>
<dbReference type="InterPro" id="IPR034686">
    <property type="entry name" value="Terpene_cyclase-like_2"/>
</dbReference>
<dbReference type="NCBIfam" id="NF041564">
    <property type="entry name" value="eudesmol_syn"/>
    <property type="match status" value="1"/>
</dbReference>
<dbReference type="PANTHER" id="PTHR35201:SF4">
    <property type="entry name" value="BETA-PINACENE SYNTHASE-RELATED"/>
    <property type="match status" value="1"/>
</dbReference>
<dbReference type="PANTHER" id="PTHR35201">
    <property type="entry name" value="TERPENE SYNTHASE"/>
    <property type="match status" value="1"/>
</dbReference>
<dbReference type="Pfam" id="PF19086">
    <property type="entry name" value="Terpene_syn_C_2"/>
    <property type="match status" value="1"/>
</dbReference>
<dbReference type="SFLD" id="SFLDS00005">
    <property type="entry name" value="Isoprenoid_Synthase_Type_I"/>
    <property type="match status" value="1"/>
</dbReference>
<dbReference type="SFLD" id="SFLDG01020">
    <property type="entry name" value="Terpene_Cyclase_Like_2"/>
    <property type="match status" value="1"/>
</dbReference>
<dbReference type="SUPFAM" id="SSF48576">
    <property type="entry name" value="Terpenoid synthases"/>
    <property type="match status" value="1"/>
</dbReference>
<comment type="function">
    <text evidence="2 3">Catalyzes the conversion of (2E,6E)-farnesyl diphosphate (FPP) to yield the bicyclic sesquiterpenol 7-epi-alpha-eudesmol via a 1,10-cyclization, which requires the abstraction of the pyrophosphate from FPP to yield the (E,E)-germacradienyl cation (PubMed:23307484, PubMed:27829890). The only accepted substrate is (2E,6E)-farnesyl diphosphate (FPP) (PubMed:27829890).</text>
</comment>
<comment type="catalytic activity">
    <reaction evidence="2 3">
        <text>(2E,6E)-farnesyl diphosphate + H2O = 7-epi-alpha-eudesmol + diphosphate</text>
        <dbReference type="Rhea" id="RHEA:54044"/>
        <dbReference type="ChEBI" id="CHEBI:15377"/>
        <dbReference type="ChEBI" id="CHEBI:33019"/>
        <dbReference type="ChEBI" id="CHEBI:138040"/>
        <dbReference type="ChEBI" id="CHEBI:175763"/>
        <dbReference type="EC" id="4.2.3.169"/>
    </reaction>
</comment>
<comment type="cofactor">
    <cofactor evidence="1">
        <name>Mg(2+)</name>
        <dbReference type="ChEBI" id="CHEBI:18420"/>
    </cofactor>
    <text evidence="1">Binds 3 Mg(2+) ions per subunit.</text>
</comment>
<comment type="pathway">
    <text evidence="6">Secondary metabolite biosynthesis; terpenoid biosynthesis.</text>
</comment>
<comment type="domain">
    <text evidence="6">The Asp-Asp-Xaa-Xaa-Asp (DDXXD) motif is important for the catalytic activity, presumably through binding to Mg(2+).</text>
</comment>
<comment type="similarity">
    <text evidence="5">Belongs to the terpene synthase family.</text>
</comment>
<keyword id="KW-0456">Lyase</keyword>
<keyword id="KW-0460">Magnesium</keyword>
<keyword id="KW-0479">Metal-binding</keyword>
<keyword id="KW-1185">Reference proteome</keyword>
<sequence length="343" mass="39255">MPQDVRFDLPFETPVSKHLESARARHLRWVWEMRLVHSREGFEEYRSWDLPQAAARTYPHASADDMVVLMNWFSLAFLFDDQFDASRPDRADRIAEVARELIVTPLRPAGTPPRVACPITLAWTEVWKHLSHGMSLTWQSRFAASWGRFLEAHCEEVDLAARGLEGTLGLVEFTEFRRRTVGIHHSIDAGERSRGFEVPAQAMAHPVMERMRDLAADTIGFMNDIHSFEREKRRGDGHNLIAVLRRERGCSWQEATDEAYRMTIARLDEYLELQERVPQMCDELRLDEAQRDGVRLGVEAIQHWINGNYEWALTSGRYAAAKEGAVATAELAGRGSVDDLLTV</sequence>
<gene>
    <name evidence="7" type="ORF">SSQG_07226</name>
</gene>
<reference key="1">
    <citation type="submission" date="2009-02" db="EMBL/GenBank/DDBJ databases">
        <title>Annotation of Streptomyces viridochromogenes strain DSM 40736.</title>
        <authorList>
            <consortium name="The Broad Institute Genome Sequencing Platform"/>
            <consortium name="Broad Institute Microbial Sequencing Center"/>
            <person name="Fischbach M."/>
            <person name="Godfrey P."/>
            <person name="Ward D."/>
            <person name="Young S."/>
            <person name="Zeng Q."/>
            <person name="Koehrsen M."/>
            <person name="Alvarado L."/>
            <person name="Berlin A.M."/>
            <person name="Bochicchio J."/>
            <person name="Borenstein D."/>
            <person name="Chapman S.B."/>
            <person name="Chen Z."/>
            <person name="Engels R."/>
            <person name="Freedman E."/>
            <person name="Gellesch M."/>
            <person name="Goldberg J."/>
            <person name="Griggs A."/>
            <person name="Gujja S."/>
            <person name="Heilman E.R."/>
            <person name="Heiman D.I."/>
            <person name="Hepburn T.A."/>
            <person name="Howarth C."/>
            <person name="Jen D."/>
            <person name="Larson L."/>
            <person name="Lewis B."/>
            <person name="Mehta T."/>
            <person name="Park D."/>
            <person name="Pearson M."/>
            <person name="Richards J."/>
            <person name="Roberts A."/>
            <person name="Saif S."/>
            <person name="Shea T.D."/>
            <person name="Shenoy N."/>
            <person name="Sisk P."/>
            <person name="Stolte C."/>
            <person name="Sykes S.N."/>
            <person name="Thomson T."/>
            <person name="Walk T."/>
            <person name="White J."/>
            <person name="Yandava C."/>
            <person name="Straight P."/>
            <person name="Clardy J."/>
            <person name="Hung D."/>
            <person name="Kolter R."/>
            <person name="Mekalanos J."/>
            <person name="Walker S."/>
            <person name="Walsh C.T."/>
            <person name="Wieland-Brown L.C."/>
            <person name="Haas B."/>
            <person name="Nusbaum C."/>
            <person name="Birren B."/>
        </authorList>
    </citation>
    <scope>NUCLEOTIDE SEQUENCE [LARGE SCALE GENOMIC DNA]</scope>
    <source>
        <strain evidence="8">DSM 40736 / JCM 4977 / BCRC 1201 / Tue 494</strain>
    </source>
</reference>
<reference key="2">
    <citation type="journal article" date="2013" name="Angew. Chem. Int. Ed.">
        <title>Rapid chemical characterization of bacterial terpene synthases.</title>
        <authorList>
            <person name="Rabe P."/>
            <person name="Dickschat J.S."/>
        </authorList>
    </citation>
    <scope>FUNCTION</scope>
    <scope>CATALYTIC ACTIVITY</scope>
    <source>
        <strain>DSM 40736 / JCM 4977 / BCRC 1201 / Tue 494</strain>
    </source>
</reference>
<reference key="3">
    <citation type="journal article" date="2016" name="Beilstein J. Org. Chem.">
        <title>Mechanistic investigations on six bacterial terpene cyclases.</title>
        <authorList>
            <person name="Rabe P."/>
            <person name="Schmitz T."/>
            <person name="Dickschat J.S."/>
        </authorList>
    </citation>
    <scope>FUNCTION</scope>
    <scope>CATALYTIC ACTIVITY</scope>
    <scope>SUBSTRATE SPECIFICITY</scope>
    <scope>DOMAIN</scope>
    <scope>PATHWAY</scope>
    <source>
        <strain>DSM 40736 / JCM 4977 / BCRC 1201 / Tue 494</strain>
    </source>
</reference>